<name>PSBB_CERDE</name>
<gene>
    <name evidence="1" type="primary">psbB</name>
</gene>
<feature type="chain" id="PRO_0000359804" description="Photosystem II CP47 reaction center protein">
    <location>
        <begin position="1"/>
        <end position="508"/>
    </location>
</feature>
<feature type="transmembrane region" description="Helical" evidence="1">
    <location>
        <begin position="21"/>
        <end position="36"/>
    </location>
</feature>
<feature type="transmembrane region" description="Helical" evidence="1">
    <location>
        <begin position="101"/>
        <end position="115"/>
    </location>
</feature>
<feature type="transmembrane region" description="Helical" evidence="1">
    <location>
        <begin position="140"/>
        <end position="156"/>
    </location>
</feature>
<feature type="transmembrane region" description="Helical" evidence="1">
    <location>
        <begin position="203"/>
        <end position="218"/>
    </location>
</feature>
<feature type="transmembrane region" description="Helical" evidence="1">
    <location>
        <begin position="237"/>
        <end position="252"/>
    </location>
</feature>
<feature type="transmembrane region" description="Helical" evidence="1">
    <location>
        <begin position="457"/>
        <end position="472"/>
    </location>
</feature>
<comment type="function">
    <text evidence="1">One of the components of the core complex of photosystem II (PSII). It binds chlorophyll and helps catalyze the primary light-induced photochemical processes of PSII. PSII is a light-driven water:plastoquinone oxidoreductase, using light energy to abstract electrons from H(2)O, generating O(2) and a proton gradient subsequently used for ATP formation.</text>
</comment>
<comment type="cofactor">
    <text evidence="1">Binds multiple chlorophylls. PSII binds additional chlorophylls, carotenoids and specific lipids.</text>
</comment>
<comment type="subunit">
    <text evidence="1">PSII is composed of 1 copy each of membrane proteins PsbA, PsbB, PsbC, PsbD, PsbE, PsbF, PsbH, PsbI, PsbJ, PsbK, PsbL, PsbM, PsbT, PsbX, PsbY, PsbZ, Psb30/Ycf12, at least 3 peripheral proteins of the oxygen-evolving complex and a large number of cofactors. It forms dimeric complexes.</text>
</comment>
<comment type="subcellular location">
    <subcellularLocation>
        <location evidence="1">Plastid</location>
        <location evidence="1">Chloroplast thylakoid membrane</location>
        <topology evidence="1">Multi-pass membrane protein</topology>
    </subcellularLocation>
</comment>
<comment type="similarity">
    <text evidence="1">Belongs to the PsbB/PsbC family. PsbB subfamily.</text>
</comment>
<sequence length="508" mass="56126">MGLPWYRVHTVVLNDPGRLLSVHIMHTALVSGWAGSMALYELAVFDPSDPVLDPMWRQGMFVIPFMTRLGITNSWGGWSITGGTITNPGLWSYEGVAGAHIMFSGLCFLAAIWHWVYWDLEIFCDERTGKPSLDLPKIFGIHLFLSGLACFGFGAFHVTGLYGPGIWVSDPYGLTGKVQSVSPAWGAEGFDPFVPGGIASHHIAAGTLGILAGLFHLSVRPPQRLYKGLRMGNIETVLSSSIAAVFFAAFVVAGTMWYGSATTPIELFGPTRYQWDQGYFQQEIYRRVGNGLSENLSLSEAWSKIPEKLAFYDYIGNNPAKGGLFRAGSMDNGDGIAVGWLGHPVFRDNEGRELFVRRMPTFFETFPVVLVDGDGIVRADVPFRRAESKYSVEQVGVTVEFYGGELNGVSYSDPATVKKYARRAQLGEIFELDRATLKSDGVFRSSPRGWFTFGHASFALLFFFGHIWHGARTLFRDVFAGIDPDLDAQVEFGTFQKLGDPTTRRQVV</sequence>
<geneLocation type="chloroplast"/>
<proteinExistence type="inferred from homology"/>
<dbReference type="EMBL" id="EF614270">
    <property type="protein sequence ID" value="ABQ81477.1"/>
    <property type="molecule type" value="Genomic_DNA"/>
</dbReference>
<dbReference type="RefSeq" id="YP_001542473.1">
    <property type="nucleotide sequence ID" value="NC_009962.1"/>
</dbReference>
<dbReference type="SMR" id="A8SEC9"/>
<dbReference type="GeneID" id="5729476"/>
<dbReference type="GO" id="GO:0009535">
    <property type="term" value="C:chloroplast thylakoid membrane"/>
    <property type="evidence" value="ECO:0007669"/>
    <property type="project" value="UniProtKB-SubCell"/>
</dbReference>
<dbReference type="GO" id="GO:0009523">
    <property type="term" value="C:photosystem II"/>
    <property type="evidence" value="ECO:0007669"/>
    <property type="project" value="UniProtKB-KW"/>
</dbReference>
<dbReference type="GO" id="GO:0016168">
    <property type="term" value="F:chlorophyll binding"/>
    <property type="evidence" value="ECO:0007669"/>
    <property type="project" value="UniProtKB-UniRule"/>
</dbReference>
<dbReference type="GO" id="GO:0045156">
    <property type="term" value="F:electron transporter, transferring electrons within the cyclic electron transport pathway of photosynthesis activity"/>
    <property type="evidence" value="ECO:0007669"/>
    <property type="project" value="InterPro"/>
</dbReference>
<dbReference type="GO" id="GO:0009772">
    <property type="term" value="P:photosynthetic electron transport in photosystem II"/>
    <property type="evidence" value="ECO:0007669"/>
    <property type="project" value="InterPro"/>
</dbReference>
<dbReference type="FunFam" id="3.10.680.10:FF:000001">
    <property type="entry name" value="Photosystem II CP47 reaction center protein"/>
    <property type="match status" value="1"/>
</dbReference>
<dbReference type="Gene3D" id="3.10.680.10">
    <property type="entry name" value="Photosystem II CP47 reaction center protein"/>
    <property type="match status" value="1"/>
</dbReference>
<dbReference type="HAMAP" id="MF_01495">
    <property type="entry name" value="PSII_PsbB_CP47"/>
    <property type="match status" value="1"/>
</dbReference>
<dbReference type="InterPro" id="IPR000932">
    <property type="entry name" value="PS_antenna-like"/>
</dbReference>
<dbReference type="InterPro" id="IPR036001">
    <property type="entry name" value="PS_II_antenna-like_sf"/>
</dbReference>
<dbReference type="InterPro" id="IPR017486">
    <property type="entry name" value="PSII_PsbB"/>
</dbReference>
<dbReference type="NCBIfam" id="TIGR03039">
    <property type="entry name" value="PS_II_CP47"/>
    <property type="match status" value="1"/>
</dbReference>
<dbReference type="PANTHER" id="PTHR33180">
    <property type="entry name" value="PHOTOSYSTEM II CP43 REACTION CENTER PROTEIN"/>
    <property type="match status" value="1"/>
</dbReference>
<dbReference type="PANTHER" id="PTHR33180:SF37">
    <property type="entry name" value="PHOTOSYSTEM II CP43 REACTION CENTER PROTEIN"/>
    <property type="match status" value="1"/>
</dbReference>
<dbReference type="Pfam" id="PF00421">
    <property type="entry name" value="PSII"/>
    <property type="match status" value="1"/>
</dbReference>
<dbReference type="SUPFAM" id="SSF161077">
    <property type="entry name" value="Photosystem II antenna protein-like"/>
    <property type="match status" value="1"/>
</dbReference>
<evidence type="ECO:0000255" key="1">
    <source>
        <dbReference type="HAMAP-Rule" id="MF_01495"/>
    </source>
</evidence>
<reference key="1">
    <citation type="journal article" date="2007" name="Proc. Natl. Acad. Sci. U.S.A.">
        <title>Using plastid genome-scale data to resolve enigmatic relationships among basal angiosperms.</title>
        <authorList>
            <person name="Moore M.J."/>
            <person name="Bell C.D."/>
            <person name="Soltis P.S."/>
            <person name="Soltis D.E."/>
        </authorList>
    </citation>
    <scope>NUCLEOTIDE SEQUENCE [LARGE SCALE GENOMIC DNA]</scope>
</reference>
<accession>A8SEC9</accession>
<protein>
    <recommendedName>
        <fullName evidence="1">Photosystem II CP47 reaction center protein</fullName>
    </recommendedName>
    <alternativeName>
        <fullName evidence="1">PSII 47 kDa protein</fullName>
    </alternativeName>
    <alternativeName>
        <fullName evidence="1">Protein CP-47</fullName>
    </alternativeName>
</protein>
<organism>
    <name type="scientific">Ceratophyllum demersum</name>
    <name type="common">Rigid hornwort</name>
    <name type="synonym">Coontail</name>
    <dbReference type="NCBI Taxonomy" id="4428"/>
    <lineage>
        <taxon>Eukaryota</taxon>
        <taxon>Viridiplantae</taxon>
        <taxon>Streptophyta</taxon>
        <taxon>Embryophyta</taxon>
        <taxon>Tracheophyta</taxon>
        <taxon>Spermatophyta</taxon>
        <taxon>Magnoliopsida</taxon>
        <taxon>Ceratophyllales</taxon>
        <taxon>Ceratophyllaceae</taxon>
        <taxon>Ceratophyllum</taxon>
    </lineage>
</organism>
<keyword id="KW-0148">Chlorophyll</keyword>
<keyword id="KW-0150">Chloroplast</keyword>
<keyword id="KW-0157">Chromophore</keyword>
<keyword id="KW-0472">Membrane</keyword>
<keyword id="KW-0602">Photosynthesis</keyword>
<keyword id="KW-0604">Photosystem II</keyword>
<keyword id="KW-0934">Plastid</keyword>
<keyword id="KW-0793">Thylakoid</keyword>
<keyword id="KW-0812">Transmembrane</keyword>
<keyword id="KW-1133">Transmembrane helix</keyword>